<dbReference type="EMBL" id="AP006628">
    <property type="protein sequence ID" value="BAD04311.1"/>
    <property type="molecule type" value="Genomic_DNA"/>
</dbReference>
<dbReference type="SMR" id="Q6YQZ6"/>
<dbReference type="STRING" id="262768.PAM_226"/>
<dbReference type="KEGG" id="poy:PAM_226"/>
<dbReference type="eggNOG" id="COG0100">
    <property type="taxonomic scope" value="Bacteria"/>
</dbReference>
<dbReference type="HOGENOM" id="CLU_072439_5_0_14"/>
<dbReference type="BioCyc" id="OYEL262768:G1G26-272-MONOMER"/>
<dbReference type="Proteomes" id="UP000002523">
    <property type="component" value="Chromosome"/>
</dbReference>
<dbReference type="GO" id="GO:1990904">
    <property type="term" value="C:ribonucleoprotein complex"/>
    <property type="evidence" value="ECO:0007669"/>
    <property type="project" value="UniProtKB-KW"/>
</dbReference>
<dbReference type="GO" id="GO:0005840">
    <property type="term" value="C:ribosome"/>
    <property type="evidence" value="ECO:0007669"/>
    <property type="project" value="UniProtKB-KW"/>
</dbReference>
<dbReference type="GO" id="GO:0019843">
    <property type="term" value="F:rRNA binding"/>
    <property type="evidence" value="ECO:0007669"/>
    <property type="project" value="UniProtKB-UniRule"/>
</dbReference>
<dbReference type="GO" id="GO:0003735">
    <property type="term" value="F:structural constituent of ribosome"/>
    <property type="evidence" value="ECO:0007669"/>
    <property type="project" value="InterPro"/>
</dbReference>
<dbReference type="GO" id="GO:0006412">
    <property type="term" value="P:translation"/>
    <property type="evidence" value="ECO:0007669"/>
    <property type="project" value="UniProtKB-UniRule"/>
</dbReference>
<dbReference type="FunFam" id="3.30.420.80:FF:000001">
    <property type="entry name" value="30S ribosomal protein S11"/>
    <property type="match status" value="1"/>
</dbReference>
<dbReference type="Gene3D" id="3.30.420.80">
    <property type="entry name" value="Ribosomal protein S11"/>
    <property type="match status" value="1"/>
</dbReference>
<dbReference type="HAMAP" id="MF_01310">
    <property type="entry name" value="Ribosomal_uS11"/>
    <property type="match status" value="1"/>
</dbReference>
<dbReference type="InterPro" id="IPR001971">
    <property type="entry name" value="Ribosomal_uS11"/>
</dbReference>
<dbReference type="InterPro" id="IPR019981">
    <property type="entry name" value="Ribosomal_uS11_bac-type"/>
</dbReference>
<dbReference type="InterPro" id="IPR036967">
    <property type="entry name" value="Ribosomal_uS11_sf"/>
</dbReference>
<dbReference type="NCBIfam" id="NF003698">
    <property type="entry name" value="PRK05309.1"/>
    <property type="match status" value="1"/>
</dbReference>
<dbReference type="NCBIfam" id="TIGR03632">
    <property type="entry name" value="uS11_bact"/>
    <property type="match status" value="1"/>
</dbReference>
<dbReference type="PANTHER" id="PTHR11759">
    <property type="entry name" value="40S RIBOSOMAL PROTEIN S14/30S RIBOSOMAL PROTEIN S11"/>
    <property type="match status" value="1"/>
</dbReference>
<dbReference type="Pfam" id="PF00411">
    <property type="entry name" value="Ribosomal_S11"/>
    <property type="match status" value="1"/>
</dbReference>
<dbReference type="PIRSF" id="PIRSF002131">
    <property type="entry name" value="Ribosomal_S11"/>
    <property type="match status" value="1"/>
</dbReference>
<dbReference type="SUPFAM" id="SSF53137">
    <property type="entry name" value="Translational machinery components"/>
    <property type="match status" value="1"/>
</dbReference>
<sequence length="128" mass="13422">MARKKTTKRKVKKNVPLGIAHIHTTFNNTIVTITDLNGNAVTWSSAGALGFKGSRKSTPFAAQLAAEAVAKAAMEHGMVKVETFITGPGPGREAAIRSLQAAGLEITAIKDVTAVPHNGCRPPKPPRG</sequence>
<evidence type="ECO:0000255" key="1">
    <source>
        <dbReference type="HAMAP-Rule" id="MF_01310"/>
    </source>
</evidence>
<evidence type="ECO:0000305" key="2"/>
<accession>Q6YQZ6</accession>
<organism>
    <name type="scientific">Onion yellows phytoplasma (strain OY-M)</name>
    <dbReference type="NCBI Taxonomy" id="262768"/>
    <lineage>
        <taxon>Bacteria</taxon>
        <taxon>Bacillati</taxon>
        <taxon>Mycoplasmatota</taxon>
        <taxon>Mollicutes</taxon>
        <taxon>Acholeplasmatales</taxon>
        <taxon>Acholeplasmataceae</taxon>
        <taxon>Candidatus Phytoplasma</taxon>
        <taxon>16SrI (Aster yellows group)</taxon>
    </lineage>
</organism>
<keyword id="KW-0687">Ribonucleoprotein</keyword>
<keyword id="KW-0689">Ribosomal protein</keyword>
<keyword id="KW-0694">RNA-binding</keyword>
<keyword id="KW-0699">rRNA-binding</keyword>
<proteinExistence type="inferred from homology"/>
<gene>
    <name evidence="1" type="primary">rpsK</name>
    <name type="ordered locus">PAM_226</name>
</gene>
<protein>
    <recommendedName>
        <fullName evidence="1">Small ribosomal subunit protein uS11</fullName>
    </recommendedName>
    <alternativeName>
        <fullName evidence="2">30S ribosomal protein S11</fullName>
    </alternativeName>
</protein>
<feature type="chain" id="PRO_0000123191" description="Small ribosomal subunit protein uS11">
    <location>
        <begin position="1"/>
        <end position="128"/>
    </location>
</feature>
<name>RS11_ONYPE</name>
<reference key="1">
    <citation type="journal article" date="2004" name="Nat. Genet.">
        <title>Reductive evolution suggested from the complete genome sequence of a plant-pathogenic phytoplasma.</title>
        <authorList>
            <person name="Oshima K."/>
            <person name="Kakizawa S."/>
            <person name="Nishigawa H."/>
            <person name="Jung H.-Y."/>
            <person name="Wei W."/>
            <person name="Suzuki S."/>
            <person name="Arashida R."/>
            <person name="Nakata D."/>
            <person name="Miyata S."/>
            <person name="Ugaki M."/>
            <person name="Namba S."/>
        </authorList>
    </citation>
    <scope>NUCLEOTIDE SEQUENCE [LARGE SCALE GENOMIC DNA]</scope>
    <source>
        <strain>OY-M</strain>
    </source>
</reference>
<comment type="function">
    <text evidence="1">Located on the platform of the 30S subunit, it bridges several disparate RNA helices of the 16S rRNA. Forms part of the Shine-Dalgarno cleft in the 70S ribosome.</text>
</comment>
<comment type="subunit">
    <text evidence="1">Part of the 30S ribosomal subunit. Interacts with proteins S7 and S18. Binds to IF-3.</text>
</comment>
<comment type="similarity">
    <text evidence="1">Belongs to the universal ribosomal protein uS11 family.</text>
</comment>